<dbReference type="EMBL" id="BA000034">
    <property type="protein sequence ID" value="BAC64093.1"/>
    <property type="molecule type" value="Genomic_DNA"/>
</dbReference>
<dbReference type="RefSeq" id="WP_011054486.1">
    <property type="nucleotide sequence ID" value="NC_004606.1"/>
</dbReference>
<dbReference type="SMR" id="P0DD95"/>
<dbReference type="GeneID" id="69900872"/>
<dbReference type="KEGG" id="sps:SPs0998"/>
<dbReference type="HOGENOM" id="CLU_036856_0_1_9"/>
<dbReference type="GO" id="GO:0005737">
    <property type="term" value="C:cytoplasm"/>
    <property type="evidence" value="ECO:0007669"/>
    <property type="project" value="UniProtKB-SubCell"/>
</dbReference>
<dbReference type="GO" id="GO:0016149">
    <property type="term" value="F:translation release factor activity, codon specific"/>
    <property type="evidence" value="ECO:0007669"/>
    <property type="project" value="UniProtKB-UniRule"/>
</dbReference>
<dbReference type="FunFam" id="3.30.160.20:FF:000027">
    <property type="entry name" value="Peptide chain release factor 1"/>
    <property type="match status" value="1"/>
</dbReference>
<dbReference type="FunFam" id="3.30.70.1660:FF:000002">
    <property type="entry name" value="Peptide chain release factor 1"/>
    <property type="match status" value="1"/>
</dbReference>
<dbReference type="FunFam" id="3.30.70.1660:FF:000004">
    <property type="entry name" value="Peptide chain release factor 1"/>
    <property type="match status" value="1"/>
</dbReference>
<dbReference type="Gene3D" id="3.30.160.20">
    <property type="match status" value="1"/>
</dbReference>
<dbReference type="Gene3D" id="3.30.70.1660">
    <property type="match status" value="2"/>
</dbReference>
<dbReference type="Gene3D" id="6.10.140.1950">
    <property type="match status" value="1"/>
</dbReference>
<dbReference type="HAMAP" id="MF_00093">
    <property type="entry name" value="Rel_fac_1"/>
    <property type="match status" value="1"/>
</dbReference>
<dbReference type="InterPro" id="IPR005139">
    <property type="entry name" value="PCRF"/>
</dbReference>
<dbReference type="InterPro" id="IPR000352">
    <property type="entry name" value="Pep_chain_release_fac_I"/>
</dbReference>
<dbReference type="InterPro" id="IPR045853">
    <property type="entry name" value="Pep_chain_release_fac_I_sf"/>
</dbReference>
<dbReference type="InterPro" id="IPR050057">
    <property type="entry name" value="Prokaryotic/Mito_RF"/>
</dbReference>
<dbReference type="InterPro" id="IPR004373">
    <property type="entry name" value="RF-1"/>
</dbReference>
<dbReference type="NCBIfam" id="TIGR00019">
    <property type="entry name" value="prfA"/>
    <property type="match status" value="1"/>
</dbReference>
<dbReference type="NCBIfam" id="NF001859">
    <property type="entry name" value="PRK00591.1"/>
    <property type="match status" value="1"/>
</dbReference>
<dbReference type="PANTHER" id="PTHR43804">
    <property type="entry name" value="LD18447P"/>
    <property type="match status" value="1"/>
</dbReference>
<dbReference type="PANTHER" id="PTHR43804:SF7">
    <property type="entry name" value="LD18447P"/>
    <property type="match status" value="1"/>
</dbReference>
<dbReference type="Pfam" id="PF03462">
    <property type="entry name" value="PCRF"/>
    <property type="match status" value="1"/>
</dbReference>
<dbReference type="Pfam" id="PF00472">
    <property type="entry name" value="RF-1"/>
    <property type="match status" value="1"/>
</dbReference>
<dbReference type="SMART" id="SM00937">
    <property type="entry name" value="PCRF"/>
    <property type="match status" value="1"/>
</dbReference>
<dbReference type="SUPFAM" id="SSF75620">
    <property type="entry name" value="Release factor"/>
    <property type="match status" value="1"/>
</dbReference>
<dbReference type="PROSITE" id="PS00745">
    <property type="entry name" value="RF_PROK_I"/>
    <property type="match status" value="1"/>
</dbReference>
<comment type="function">
    <text evidence="1">Peptide chain release factor 1 directs the termination of translation in response to the peptide chain termination codons UAG and UAA.</text>
</comment>
<comment type="subcellular location">
    <subcellularLocation>
        <location evidence="1">Cytoplasm</location>
    </subcellularLocation>
</comment>
<comment type="PTM">
    <text evidence="1">Methylated by PrmC. Methylation increases the termination efficiency of RF1.</text>
</comment>
<comment type="similarity">
    <text evidence="1">Belongs to the prokaryotic/mitochondrial release factor family.</text>
</comment>
<name>RF1_STRPQ</name>
<keyword id="KW-0963">Cytoplasm</keyword>
<keyword id="KW-0488">Methylation</keyword>
<keyword id="KW-0648">Protein biosynthesis</keyword>
<organism>
    <name type="scientific">Streptococcus pyogenes serotype M3 (strain SSI-1)</name>
    <dbReference type="NCBI Taxonomy" id="193567"/>
    <lineage>
        <taxon>Bacteria</taxon>
        <taxon>Bacillati</taxon>
        <taxon>Bacillota</taxon>
        <taxon>Bacilli</taxon>
        <taxon>Lactobacillales</taxon>
        <taxon>Streptococcaceae</taxon>
        <taxon>Streptococcus</taxon>
    </lineage>
</organism>
<evidence type="ECO:0000255" key="1">
    <source>
        <dbReference type="HAMAP-Rule" id="MF_00093"/>
    </source>
</evidence>
<feature type="chain" id="PRO_0000411487" description="Peptide chain release factor 1">
    <location>
        <begin position="1"/>
        <end position="359"/>
    </location>
</feature>
<feature type="modified residue" description="N5-methylglutamine" evidence="1">
    <location>
        <position position="236"/>
    </location>
</feature>
<protein>
    <recommendedName>
        <fullName evidence="1">Peptide chain release factor 1</fullName>
        <shortName evidence="1">RF-1</shortName>
    </recommendedName>
</protein>
<sequence length="359" mass="40583">MNIYDQLQAVEDRYEELGELLSDPDVVSDTKRFMELSREEANTRETVTAYREYKQVIQTISDAEEMIKDASGDPELEEMAKEELKESKAAKEEYEEKLKILLLPKDPNDDKNIILEIRGAAGGDEAALFAGDLLTMYQKYAETQGWRFEVMESSVNGVGGIKEVVAMVSGQSVYSKLKYESGAHRVQRVPVTESQGRVHTSTATVLVMPEVEEVEYDIDPKDLRIDIYHASGAGGQNVNKVATAVRMVHIPTGIKVEMQEERTQQKNRDKAMKIIRARVADHFAQIAQDEQDAERKSTVGTGDRSERIRTYNFPQNRVTDHRIGLTLQKLDTILSGKMDEVIDALVMYDQTKKLESLNN</sequence>
<gene>
    <name evidence="1" type="primary">prfA</name>
    <name type="ordered locus">SPs0998</name>
</gene>
<proteinExistence type="inferred from homology"/>
<accession>P0DD95</accession>
<accession>Q8K7I2</accession>
<reference key="1">
    <citation type="journal article" date="2003" name="Genome Res.">
        <title>Genome sequence of an M3 strain of Streptococcus pyogenes reveals a large-scale genomic rearrangement in invasive strains and new insights into phage evolution.</title>
        <authorList>
            <person name="Nakagawa I."/>
            <person name="Kurokawa K."/>
            <person name="Yamashita A."/>
            <person name="Nakata M."/>
            <person name="Tomiyasu Y."/>
            <person name="Okahashi N."/>
            <person name="Kawabata S."/>
            <person name="Yamazaki K."/>
            <person name="Shiba T."/>
            <person name="Yasunaga T."/>
            <person name="Hayashi H."/>
            <person name="Hattori M."/>
            <person name="Hamada S."/>
        </authorList>
    </citation>
    <scope>NUCLEOTIDE SEQUENCE [LARGE SCALE GENOMIC DNA]</scope>
    <source>
        <strain>SSI-1</strain>
    </source>
</reference>